<comment type="function">
    <text evidence="1">Is probably a protein kinase regulator of UbiI activity which is involved in aerobic coenzyme Q (ubiquinone) biosynthesis.</text>
</comment>
<comment type="pathway">
    <text>Cofactor biosynthesis; ubiquinone biosynthesis [regulation].</text>
</comment>
<comment type="subcellular location">
    <subcellularLocation>
        <location evidence="1">Cell inner membrane</location>
        <topology evidence="1">Multi-pass membrane protein</topology>
    </subcellularLocation>
</comment>
<comment type="similarity">
    <text evidence="1">Belongs to the ABC1 family. UbiB subfamily.</text>
</comment>
<evidence type="ECO:0000255" key="1">
    <source>
        <dbReference type="HAMAP-Rule" id="MF_00414"/>
    </source>
</evidence>
<dbReference type="EC" id="2.7.-.-" evidence="1"/>
<dbReference type="EMBL" id="CP000444">
    <property type="protein sequence ID" value="ABI41406.1"/>
    <property type="molecule type" value="Genomic_DNA"/>
</dbReference>
<dbReference type="SMR" id="Q0HZP9"/>
<dbReference type="KEGG" id="shm:Shewmr7_0403"/>
<dbReference type="HOGENOM" id="CLU_006533_0_0_6"/>
<dbReference type="UniPathway" id="UPA00232"/>
<dbReference type="GO" id="GO:0005886">
    <property type="term" value="C:plasma membrane"/>
    <property type="evidence" value="ECO:0007669"/>
    <property type="project" value="UniProtKB-SubCell"/>
</dbReference>
<dbReference type="GO" id="GO:0005524">
    <property type="term" value="F:ATP binding"/>
    <property type="evidence" value="ECO:0007669"/>
    <property type="project" value="UniProtKB-KW"/>
</dbReference>
<dbReference type="GO" id="GO:0004672">
    <property type="term" value="F:protein kinase activity"/>
    <property type="evidence" value="ECO:0007669"/>
    <property type="project" value="UniProtKB-UniRule"/>
</dbReference>
<dbReference type="GO" id="GO:0010795">
    <property type="term" value="P:regulation of ubiquinone biosynthetic process"/>
    <property type="evidence" value="ECO:0007669"/>
    <property type="project" value="UniProtKB-UniRule"/>
</dbReference>
<dbReference type="GO" id="GO:0006744">
    <property type="term" value="P:ubiquinone biosynthetic process"/>
    <property type="evidence" value="ECO:0007669"/>
    <property type="project" value="UniProtKB-UniPathway"/>
</dbReference>
<dbReference type="CDD" id="cd13972">
    <property type="entry name" value="UbiB"/>
    <property type="match status" value="1"/>
</dbReference>
<dbReference type="HAMAP" id="MF_00414">
    <property type="entry name" value="UbiB"/>
    <property type="match status" value="1"/>
</dbReference>
<dbReference type="InterPro" id="IPR004147">
    <property type="entry name" value="ABC1_dom"/>
</dbReference>
<dbReference type="InterPro" id="IPR011009">
    <property type="entry name" value="Kinase-like_dom_sf"/>
</dbReference>
<dbReference type="InterPro" id="IPR010232">
    <property type="entry name" value="UbiB"/>
</dbReference>
<dbReference type="InterPro" id="IPR045308">
    <property type="entry name" value="UbiB_bact"/>
</dbReference>
<dbReference type="InterPro" id="IPR050154">
    <property type="entry name" value="UbiB_kinase"/>
</dbReference>
<dbReference type="NCBIfam" id="NF003404">
    <property type="entry name" value="PRK04750.1"/>
    <property type="match status" value="1"/>
</dbReference>
<dbReference type="NCBIfam" id="TIGR01982">
    <property type="entry name" value="UbiB"/>
    <property type="match status" value="1"/>
</dbReference>
<dbReference type="PANTHER" id="PTHR10566">
    <property type="entry name" value="CHAPERONE-ACTIVITY OF BC1 COMPLEX CABC1 -RELATED"/>
    <property type="match status" value="1"/>
</dbReference>
<dbReference type="PANTHER" id="PTHR10566:SF113">
    <property type="entry name" value="PROTEIN ACTIVITY OF BC1 COMPLEX KINASE 7, CHLOROPLASTIC"/>
    <property type="match status" value="1"/>
</dbReference>
<dbReference type="Pfam" id="PF03109">
    <property type="entry name" value="ABC1"/>
    <property type="match status" value="1"/>
</dbReference>
<dbReference type="SUPFAM" id="SSF56112">
    <property type="entry name" value="Protein kinase-like (PK-like)"/>
    <property type="match status" value="1"/>
</dbReference>
<feature type="chain" id="PRO_1000050062" description="Probable protein kinase UbiB">
    <location>
        <begin position="1"/>
        <end position="549"/>
    </location>
</feature>
<feature type="transmembrane region" description="Helical" evidence="1">
    <location>
        <begin position="498"/>
        <end position="518"/>
    </location>
</feature>
<feature type="transmembrane region" description="Helical" evidence="1">
    <location>
        <begin position="520"/>
        <end position="540"/>
    </location>
</feature>
<feature type="domain" description="Protein kinase" evidence="1">
    <location>
        <begin position="123"/>
        <end position="501"/>
    </location>
</feature>
<feature type="active site" description="Proton acceptor" evidence="1">
    <location>
        <position position="287"/>
    </location>
</feature>
<feature type="binding site" evidence="1">
    <location>
        <begin position="129"/>
        <end position="137"/>
    </location>
    <ligand>
        <name>ATP</name>
        <dbReference type="ChEBI" id="CHEBI:30616"/>
    </ligand>
</feature>
<feature type="binding site" evidence="1">
    <location>
        <position position="152"/>
    </location>
    <ligand>
        <name>ATP</name>
        <dbReference type="ChEBI" id="CHEBI:30616"/>
    </ligand>
</feature>
<proteinExistence type="inferred from homology"/>
<sequence length="549" mass="63241">MTLASIRRGYHVIKTLLQYGLDDVLPPKMTPWYFKLARNSLFWIRNKHKGKSGGERLKLAMQELGPVYIKLGQMLSTRRDLLSDEWANELAMLQDKVPPFDGALARQAIEAELKAPIESFFDDFNETPLASASISQVHTATLKSNGKAVVLKVLRPNVEAKIQADLLLMSQTAKVIDYLLGEGNRLRPSEVIEDYRVTILGELNLKLEALNAIKLRNNFLDSDALYIPYVYEEFCYPRLMVMERIYGIPVSDIAALKAQGTNFKLLAERGVELFFTQVFRDNFFHADMHPGNIFISRDHPENPYYIGLDCGIMGTLSEVDKRYLAENFLAFFNRDYHRIAQLYIESGWVSEKTDLQAFEQAIKVVCEPMFNKPLDEISFGHVLLELFRTARHFDIVVQPQLVLLEKTLLYIEGLGRQLYPQLDLWQTAKPFLEQWMAEQVGPKAMFKKVSTKLPYWSDKLPEFPELIYDNLKLGRKLLSSQQQMLDKYLKYQQQAHKSNYLLITSAILLICGTLLFNQDATLWSPYVCLISGAALWIIGWRSRPKNRKF</sequence>
<keyword id="KW-0067">ATP-binding</keyword>
<keyword id="KW-0997">Cell inner membrane</keyword>
<keyword id="KW-1003">Cell membrane</keyword>
<keyword id="KW-0418">Kinase</keyword>
<keyword id="KW-0472">Membrane</keyword>
<keyword id="KW-0547">Nucleotide-binding</keyword>
<keyword id="KW-0808">Transferase</keyword>
<keyword id="KW-0812">Transmembrane</keyword>
<keyword id="KW-1133">Transmembrane helix</keyword>
<keyword id="KW-0831">Ubiquinone biosynthesis</keyword>
<accession>Q0HZP9</accession>
<reference key="1">
    <citation type="submission" date="2006-08" db="EMBL/GenBank/DDBJ databases">
        <title>Complete sequence of chromosome 1 of Shewanella sp. MR-7.</title>
        <authorList>
            <person name="Copeland A."/>
            <person name="Lucas S."/>
            <person name="Lapidus A."/>
            <person name="Barry K."/>
            <person name="Detter J.C."/>
            <person name="Glavina del Rio T."/>
            <person name="Hammon N."/>
            <person name="Israni S."/>
            <person name="Dalin E."/>
            <person name="Tice H."/>
            <person name="Pitluck S."/>
            <person name="Kiss H."/>
            <person name="Brettin T."/>
            <person name="Bruce D."/>
            <person name="Han C."/>
            <person name="Tapia R."/>
            <person name="Gilna P."/>
            <person name="Schmutz J."/>
            <person name="Larimer F."/>
            <person name="Land M."/>
            <person name="Hauser L."/>
            <person name="Kyrpides N."/>
            <person name="Mikhailova N."/>
            <person name="Nealson K."/>
            <person name="Konstantinidis K."/>
            <person name="Klappenbach J."/>
            <person name="Tiedje J."/>
            <person name="Richardson P."/>
        </authorList>
    </citation>
    <scope>NUCLEOTIDE SEQUENCE [LARGE SCALE GENOMIC DNA]</scope>
    <source>
        <strain>MR-7</strain>
    </source>
</reference>
<protein>
    <recommendedName>
        <fullName evidence="1">Probable protein kinase UbiB</fullName>
        <ecNumber evidence="1">2.7.-.-</ecNumber>
    </recommendedName>
    <alternativeName>
        <fullName evidence="1">Ubiquinone biosynthesis protein UbiB</fullName>
    </alternativeName>
</protein>
<gene>
    <name evidence="1" type="primary">ubiB</name>
    <name type="ordered locus">Shewmr7_0403</name>
</gene>
<name>UBIB_SHESR</name>
<organism>
    <name type="scientific">Shewanella sp. (strain MR-7)</name>
    <dbReference type="NCBI Taxonomy" id="60481"/>
    <lineage>
        <taxon>Bacteria</taxon>
        <taxon>Pseudomonadati</taxon>
        <taxon>Pseudomonadota</taxon>
        <taxon>Gammaproteobacteria</taxon>
        <taxon>Alteromonadales</taxon>
        <taxon>Shewanellaceae</taxon>
        <taxon>Shewanella</taxon>
    </lineage>
</organism>